<proteinExistence type="predicted"/>
<keyword id="KW-1185">Reference proteome</keyword>
<sequence>MPLPYKVNFKLPLEYLSLQDWNNFVQNLIFINQYGTAKLLQYYKNGSFQNLKDVFAKYLYVAQLKVNGYNVLHNLSEPLAYTFGNVFQELANKPSINLPEINVPVSSINYKLPPVEKQIEALIPNLISKISIPINIAGTQFTFSGNSNLAQLTSQYLQSVYLQTWRSITLQNLGNSSVQINNSIYLMPKQCLKITVSNPQEVQISAQSSTLLSELIEFNVIPITAYTITITNSQPDPTPSPFQQLLILNLSNIISSPSQLLNLQFCLDSQCKTPLYSWIESYNSNLSNVYIWINLPISIPANSSITIYMFVRNSIQYPYTGMRPDLTSTYAQYDNGKNVFLIYFNGNEPLSNFNTEGNTIQQISTIGPLGNTINAIYLSGYSNNVGFVYTGKSVPNQPVIVEASAKDMDNQTGGLGADNGQAGIADSTNTAIINAIGVTMGNNSDYFSQDFYINGSETRGYNLQGSAVSQWVYAWVVYQGSSASSWSGCIAPQLYSSNGGYCGTVNNNPLSSSTQLYLAVIGGVGYYDYWQTAWNFMRMRTYPPNGVMPSNTNPQLTTIYVA</sequence>
<organismHost>
    <name type="scientific">Saccharolobus islandicus</name>
    <name type="common">Sulfolobus islandicus</name>
    <dbReference type="NCBI Taxonomy" id="43080"/>
</organismHost>
<accession>Q8QL25</accession>
<protein>
    <recommendedName>
        <fullName>Uncharacterized protein 562</fullName>
    </recommendedName>
</protein>
<dbReference type="EMBL" id="AJ414696">
    <property type="protein sequence ID" value="CAC93986.1"/>
    <property type="molecule type" value="Genomic_DNA"/>
</dbReference>
<dbReference type="RefSeq" id="NP_666619.1">
    <property type="nucleotide sequence ID" value="NC_004087.1"/>
</dbReference>
<dbReference type="KEGG" id="vg:951368"/>
<dbReference type="OrthoDB" id="4575at10239"/>
<dbReference type="Proteomes" id="UP000002270">
    <property type="component" value="Genome"/>
</dbReference>
<dbReference type="InterPro" id="IPR018765">
    <property type="entry name" value="DUF2341"/>
</dbReference>
<dbReference type="Pfam" id="PF10102">
    <property type="entry name" value="DUF2341"/>
    <property type="match status" value="1"/>
</dbReference>
<reference key="1">
    <citation type="journal article" date="2001" name="Virology">
        <title>Sequences and replication of genomes of the archaeal rudiviruses SIRV1 and SIRV2: relationships to the archaeal lipothrixvirus SIFV and some eukaryal viruses.</title>
        <authorList>
            <person name="Peng X."/>
            <person name="Blum H."/>
            <person name="She Q."/>
            <person name="Mallok S."/>
            <person name="Bruegger K."/>
            <person name="Garrett R.A."/>
            <person name="Zillig W."/>
            <person name="Prangishvili D."/>
        </authorList>
    </citation>
    <scope>NUCLEOTIDE SEQUENCE [LARGE SCALE GENOMIC DNA]</scope>
    <source>
        <strain>Isolate variant VIII</strain>
    </source>
</reference>
<name>Y562_SIRV1</name>
<gene>
    <name type="ORF">562</name>
</gene>
<organism>
    <name type="scientific">Sulfolobus islandicus rod-shaped virus 1</name>
    <name type="common">SIRV-1</name>
    <name type="synonym">Sulfolobus virus SIRV-1</name>
    <dbReference type="NCBI Taxonomy" id="157898"/>
    <lineage>
        <taxon>Viruses</taxon>
        <taxon>Adnaviria</taxon>
        <taxon>Zilligvirae</taxon>
        <taxon>Taleaviricota</taxon>
        <taxon>Tokiviricetes</taxon>
        <taxon>Ligamenvirales</taxon>
        <taxon>Rudiviridae</taxon>
        <taxon>Icerudivirus</taxon>
        <taxon>Icerudivirus SIRV1</taxon>
    </lineage>
</organism>
<feature type="chain" id="PRO_0000342305" description="Uncharacterized protein 562">
    <location>
        <begin position="1"/>
        <end position="562"/>
    </location>
</feature>